<feature type="signal peptide" evidence="1">
    <location>
        <begin position="1"/>
        <end position="17"/>
    </location>
</feature>
<feature type="chain" id="PRO_5004316049" description="Transferrin receptor subunit ESAG6" evidence="1">
    <location>
        <begin position="18"/>
        <end position="376"/>
    </location>
</feature>
<feature type="propeptide" id="PRO_0000458751" description="Removed in mature form" evidence="1">
    <location>
        <begin position="377"/>
        <end position="399"/>
    </location>
</feature>
<feature type="lipid moiety-binding region" description="GPI-anchor amidated asparagine" evidence="1">
    <location>
        <position position="376"/>
    </location>
</feature>
<feature type="glycosylation site" description="N-linked (GlcNAc...) asparagine" evidence="2 6 14">
    <location>
        <position position="26"/>
    </location>
</feature>
<feature type="glycosylation site" description="N-linked (GlcNAc...) asparagine" evidence="2">
    <location>
        <position position="110"/>
    </location>
</feature>
<feature type="glycosylation site" description="N-linked (GlcNAc...) asparagine" evidence="2 6 14">
    <location>
        <position position="235"/>
    </location>
</feature>
<feature type="glycosylation site" description="N-linked (GlcNAc...) asparagine" evidence="2">
    <location>
        <position position="250"/>
    </location>
</feature>
<feature type="glycosylation site" description="N-linked (GlcNAc...) asparagine" evidence="2">
    <location>
        <position position="360"/>
    </location>
</feature>
<feature type="disulfide bond" evidence="6 13 14">
    <location>
        <begin position="34"/>
        <end position="161"/>
    </location>
</feature>
<feature type="disulfide bond" evidence="6 13 14">
    <location>
        <begin position="84"/>
        <end position="312"/>
    </location>
</feature>
<feature type="disulfide bond" evidence="6 13 14">
    <location>
        <begin position="144"/>
        <end position="215"/>
    </location>
</feature>
<feature type="strand" evidence="15">
    <location>
        <begin position="24"/>
        <end position="26"/>
    </location>
</feature>
<feature type="helix" evidence="15">
    <location>
        <begin position="27"/>
        <end position="73"/>
    </location>
</feature>
<feature type="strand" evidence="15">
    <location>
        <begin position="81"/>
        <end position="83"/>
    </location>
</feature>
<feature type="helix" evidence="15">
    <location>
        <begin position="87"/>
        <end position="135"/>
    </location>
</feature>
<feature type="strand" evidence="15">
    <location>
        <begin position="136"/>
        <end position="138"/>
    </location>
</feature>
<feature type="turn" evidence="15">
    <location>
        <begin position="139"/>
        <end position="141"/>
    </location>
</feature>
<feature type="strand" evidence="15">
    <location>
        <begin position="142"/>
        <end position="149"/>
    </location>
</feature>
<feature type="turn" evidence="15">
    <location>
        <begin position="159"/>
        <end position="161"/>
    </location>
</feature>
<feature type="strand" evidence="15">
    <location>
        <begin position="162"/>
        <end position="167"/>
    </location>
</feature>
<feature type="helix" evidence="15">
    <location>
        <begin position="168"/>
        <end position="170"/>
    </location>
</feature>
<feature type="helix" evidence="15">
    <location>
        <begin position="177"/>
        <end position="182"/>
    </location>
</feature>
<feature type="helix" evidence="15">
    <location>
        <begin position="189"/>
        <end position="194"/>
    </location>
</feature>
<feature type="helix" evidence="15">
    <location>
        <begin position="198"/>
        <end position="201"/>
    </location>
</feature>
<feature type="helix" evidence="15">
    <location>
        <begin position="203"/>
        <end position="206"/>
    </location>
</feature>
<feature type="strand" evidence="15">
    <location>
        <begin position="207"/>
        <end position="209"/>
    </location>
</feature>
<feature type="helix" evidence="15">
    <location>
        <begin position="216"/>
        <end position="218"/>
    </location>
</feature>
<feature type="strand" evidence="15">
    <location>
        <begin position="224"/>
        <end position="228"/>
    </location>
</feature>
<feature type="turn" evidence="15">
    <location>
        <begin position="239"/>
        <end position="242"/>
    </location>
</feature>
<feature type="strand" evidence="15">
    <location>
        <begin position="255"/>
        <end position="257"/>
    </location>
</feature>
<feature type="helix" evidence="15">
    <location>
        <begin position="260"/>
        <end position="262"/>
    </location>
</feature>
<feature type="strand" evidence="15">
    <location>
        <begin position="265"/>
        <end position="267"/>
    </location>
</feature>
<feature type="strand" evidence="15">
    <location>
        <begin position="269"/>
        <end position="271"/>
    </location>
</feature>
<feature type="helix" evidence="15">
    <location>
        <begin position="275"/>
        <end position="277"/>
    </location>
</feature>
<feature type="helix" evidence="15">
    <location>
        <begin position="279"/>
        <end position="309"/>
    </location>
</feature>
<feature type="helix" evidence="15">
    <location>
        <begin position="310"/>
        <end position="312"/>
    </location>
</feature>
<feature type="helix" evidence="15">
    <location>
        <begin position="315"/>
        <end position="319"/>
    </location>
</feature>
<feature type="helix" evidence="15">
    <location>
        <begin position="323"/>
        <end position="340"/>
    </location>
</feature>
<keyword id="KW-0002">3D-structure</keyword>
<keyword id="KW-1003">Cell membrane</keyword>
<keyword id="KW-1015">Disulfide bond</keyword>
<keyword id="KW-0325">Glycoprotein</keyword>
<keyword id="KW-0336">GPI-anchor</keyword>
<keyword id="KW-0449">Lipoprotein</keyword>
<keyword id="KW-0472">Membrane</keyword>
<keyword id="KW-0675">Receptor</keyword>
<keyword id="KW-0732">Signal</keyword>
<gene>
    <name evidence="9" type="primary">ESAG6</name>
    <name evidence="12" type="synonym">13J3.10</name>
</gene>
<evidence type="ECO:0000255" key="1"/>
<evidence type="ECO:0000255" key="2">
    <source>
        <dbReference type="PROSITE-ProRule" id="PRU00498"/>
    </source>
</evidence>
<evidence type="ECO:0000269" key="3">
    <source>
    </source>
</evidence>
<evidence type="ECO:0000269" key="4">
    <source>
    </source>
</evidence>
<evidence type="ECO:0000269" key="5">
    <source>
    </source>
</evidence>
<evidence type="ECO:0000269" key="6">
    <source>
    </source>
</evidence>
<evidence type="ECO:0000269" key="7">
    <source>
    </source>
</evidence>
<evidence type="ECO:0000269" key="8">
    <source>
    </source>
</evidence>
<evidence type="ECO:0000303" key="9">
    <source>
    </source>
</evidence>
<evidence type="ECO:0000303" key="10">
    <source>
    </source>
</evidence>
<evidence type="ECO:0000305" key="11"/>
<evidence type="ECO:0000312" key="12">
    <source>
        <dbReference type="EMBL" id="CAD21457.1"/>
    </source>
</evidence>
<evidence type="ECO:0007744" key="13">
    <source>
        <dbReference type="PDB" id="6SOY"/>
    </source>
</evidence>
<evidence type="ECO:0007744" key="14">
    <source>
        <dbReference type="PDB" id="6SOZ"/>
    </source>
</evidence>
<evidence type="ECO:0007829" key="15">
    <source>
        <dbReference type="PDB" id="6SOY"/>
    </source>
</evidence>
<dbReference type="EMBL" id="AL670322">
    <property type="protein sequence ID" value="CAD21457.1"/>
    <property type="molecule type" value="Genomic_DNA"/>
</dbReference>
<dbReference type="PDB" id="6SOY">
    <property type="method" value="X-ray"/>
    <property type="resolution" value="2.75 A"/>
    <property type="chains" value="A=1-399"/>
</dbReference>
<dbReference type="PDB" id="6SOZ">
    <property type="method" value="X-ray"/>
    <property type="resolution" value="3.42 A"/>
    <property type="chains" value="A=1-399"/>
</dbReference>
<dbReference type="PDBsum" id="6SOY"/>
<dbReference type="PDBsum" id="6SOZ"/>
<dbReference type="SMR" id="Q8WPU1"/>
<dbReference type="iPTMnet" id="Q8WPU1"/>
<dbReference type="VEuPathDB" id="TriTrypDB:Tb427_000013100"/>
<dbReference type="VEuPathDB" id="TriTrypDB:Tb927.7.3250"/>
<dbReference type="GO" id="GO:0020016">
    <property type="term" value="C:ciliary pocket"/>
    <property type="evidence" value="ECO:0000314"/>
    <property type="project" value="UniProtKB"/>
</dbReference>
<dbReference type="GO" id="GO:0005886">
    <property type="term" value="C:plasma membrane"/>
    <property type="evidence" value="ECO:0007669"/>
    <property type="project" value="UniProtKB-SubCell"/>
</dbReference>
<dbReference type="GO" id="GO:0098552">
    <property type="term" value="C:side of membrane"/>
    <property type="evidence" value="ECO:0007669"/>
    <property type="project" value="UniProtKB-KW"/>
</dbReference>
<dbReference type="GO" id="GO:0004998">
    <property type="term" value="F:transferrin receptor activity"/>
    <property type="evidence" value="ECO:0000314"/>
    <property type="project" value="UniProtKB"/>
</dbReference>
<dbReference type="GO" id="GO:0042783">
    <property type="term" value="P:symbiont-mediated evasion of host immune response"/>
    <property type="evidence" value="ECO:0007669"/>
    <property type="project" value="InterPro"/>
</dbReference>
<dbReference type="Gene3D" id="3.90.150.10">
    <property type="entry name" value="Variant Surface Glycoprotein, subunit A domain 1"/>
    <property type="match status" value="1"/>
</dbReference>
<dbReference type="InterPro" id="IPR001812">
    <property type="entry name" value="Trypano_VSG_A_N_dom"/>
</dbReference>
<dbReference type="Pfam" id="PF00913">
    <property type="entry name" value="Trypan_glycop"/>
    <property type="match status" value="1"/>
</dbReference>
<dbReference type="SUPFAM" id="SSF58087">
    <property type="entry name" value="Variant surface glycoprotein (N-terminal domain)"/>
    <property type="match status" value="1"/>
</dbReference>
<name>ESAG6_TRYBB</name>
<protein>
    <recommendedName>
        <fullName evidence="10">Transferrin receptor subunit ESAG6</fullName>
    </recommendedName>
    <alternativeName>
        <fullName evidence="9">Expression site associated gene 6</fullName>
    </alternativeName>
</protein>
<accession>Q8WPU1</accession>
<sequence length="399" mass="43850">MRFWFVLLALLGKEIYAYENERNALNATAANKVCGLSTYLKGIAHRVNSESAVVTEKLSDLKMRSIQLQLSVMRNRVPSGEQDCKDIRTLLKTVLRNEFTFQQELEEMRNASALAAAAAGLAAGRLEEWIFVFAQAAGRSSQFCISVGKTGPAEYNNLQECFDGTIGPETLYKIEDSRVKESAKTSLQLHEVLSSISFGSLGVKNIRGGNGKDGCNLVRTDTDGVLEGGSPTRHNLTWGGGVMNFGSYQNGSMYVEGGEYGDATEYGAVRWTEDPSKVSIFKDVIRLFARFQEAKNAVVKKIKTTVDELTKCIGQKEAELTNDQLYEEFIWETINRLELSKRVSEQSAFGEEEETIVKFNYTAEPVRGPFTVAGANAAAIHLSVSTAALCRSALLLGVL</sequence>
<proteinExistence type="evidence at protein level"/>
<reference evidence="12" key="1">
    <citation type="journal article" date="2001" name="Genomics">
        <title>Large-insert BAC/YAC libraries for selective re-isolation of genomic regions by homologous recombination in yeast.</title>
        <authorList>
            <person name="Zeng C."/>
            <person name="Kouprina N."/>
            <person name="Zhu B."/>
            <person name="Cairo A."/>
            <person name="Hoek M."/>
            <person name="Cross G.A.M."/>
            <person name="Osoegawa K."/>
            <person name="Larionov V."/>
            <person name="de Jong P."/>
        </authorList>
    </citation>
    <scope>NUCLEOTIDE SEQUENCE [GENOMIC DNA]</scope>
    <source>
        <strain evidence="12">427</strain>
    </source>
</reference>
<reference evidence="12" key="2">
    <citation type="journal article" date="2002" name="Mol. Biochem. Parasitol.">
        <title>The architecture of variant surface glycoprotein gene expression sites in Trypanosoma brucei.</title>
        <authorList>
            <person name="Berriman M."/>
            <person name="Hall N."/>
            <person name="Sheader K."/>
            <person name="Bringaud F."/>
            <person name="Tiwari B."/>
            <person name="Isobe T."/>
            <person name="Bowman S."/>
            <person name="Corton C."/>
            <person name="Clark L."/>
            <person name="Cross G.A.M."/>
            <person name="Hoek M."/>
            <person name="Zanders T."/>
            <person name="Berberof M."/>
            <person name="Borst P."/>
            <person name="Rudenko G."/>
        </authorList>
    </citation>
    <scope>NUCLEOTIDE SEQUENCE [GENOMIC DNA]</scope>
    <scope>POLYMORPHISM</scope>
    <source>
        <strain evidence="12">427</strain>
    </source>
</reference>
<reference evidence="12" key="3">
    <citation type="submission" date="2002-01" db="EMBL/GenBank/DDBJ databases">
        <title>Construction and Characterization of Three Bacterial Artificial Chromosome Libraries for Trypanosoma brucei.</title>
        <authorList>
            <person name="Zeng C."/>
            <person name="Zhao B."/>
            <person name="Hierl M."/>
            <person name="Catanese J."/>
            <person name="Gerrard C."/>
            <person name="Melville S.E."/>
            <person name="Hoek M."/>
            <person name="Navarro M."/>
            <person name="Cross G.A.M."/>
            <person name="El-Sayed N."/>
            <person name="Berberof M."/>
            <person name="Rudenko G."/>
            <person name="Borst P."/>
            <person name="de Jong P."/>
        </authorList>
    </citation>
    <scope>NUCLEOTIDE SEQUENCE [GENOMIC DNA]</scope>
    <source>
        <strain evidence="12">427</strain>
    </source>
</reference>
<reference evidence="11" key="4">
    <citation type="journal article" date="1994" name="Eur. J. Cell Biol.">
        <title>ESAG 6 and 7 products of Trypanosoma brucei form a transferrin binding protein complex.</title>
        <authorList>
            <person name="Steverding D."/>
            <person name="Stierhof Y.D."/>
            <person name="Chaudhri M."/>
            <person name="Ligtenberg M."/>
            <person name="Schell D."/>
            <person name="Beck-Sickinger A.G."/>
            <person name="Overath P."/>
        </authorList>
    </citation>
    <scope>FUNCTION</scope>
    <scope>SUBUNIT</scope>
    <scope>SUBCELLULAR LOCATION</scope>
    <scope>DEVELOPMENTAL STAGE</scope>
    <scope>GLYCOSYLATION</scope>
    <scope>GPI-ANCHOR</scope>
</reference>
<reference evidence="11" key="5">
    <citation type="journal article" date="1995" name="J. Cell Biol.">
        <title>Transferrin-binding protein complex is the receptor for transferrin uptake in Trypanosoma brucei.</title>
        <authorList>
            <person name="Steverding D."/>
            <person name="Stierhof Y.D."/>
            <person name="Fuchs H."/>
            <person name="Tauber R."/>
            <person name="Overath P."/>
        </authorList>
    </citation>
    <scope>FUNCTION</scope>
    <scope>SUBUNIT</scope>
    <scope>SUBCELLULAR LOCATION</scope>
    <scope>GLYCOSYLATION</scope>
</reference>
<reference evidence="11" key="6">
    <citation type="journal article" date="1999" name="Biochem. J.">
        <title>Iron-dependent regulation of transferrin receptor expression in Trypanosoma brucei.</title>
        <authorList>
            <person name="Fast B."/>
            <person name="Kremp K."/>
            <person name="Boshart M."/>
            <person name="Steverding D."/>
        </authorList>
    </citation>
    <scope>INDUCTION</scope>
</reference>
<reference evidence="11" key="7">
    <citation type="journal article" date="2008" name="Exp. Parasitol.">
        <title>Expression and purification of non-glycosylated Trypanosoma brucei transferrin receptor in insect cells.</title>
        <authorList>
            <person name="Maier A."/>
            <person name="Steverding D."/>
        </authorList>
    </citation>
    <scope>FUNCTION</scope>
    <scope>SUBUNIT</scope>
    <scope>GLYCOSYLATION</scope>
</reference>
<reference evidence="13 14" key="8">
    <citation type="journal article" date="2019" name="Nat. Microbiol.">
        <title>Structure of the trypanosome transferrin receptor reveals mechanisms of ligand recognition and immune evasion.</title>
        <authorList>
            <person name="Trevor C.E."/>
            <person name="Gonzalez-Munoz A.L."/>
            <person name="Macleod O.J.S."/>
            <person name="Woodcock P.G."/>
            <person name="Rust S."/>
            <person name="Vaughan T.J."/>
            <person name="Garman E.F."/>
            <person name="Minter R."/>
            <person name="Carrington M."/>
            <person name="Higgins M.K."/>
        </authorList>
    </citation>
    <scope>X-RAY CRYSTALLOGRAPHY (2.75 ANGSTROMS) IN COMPLEX WITH ESAG7 AND HUMAN TF</scope>
    <scope>FUNCTION</scope>
    <scope>POLYMORPHISM</scope>
    <scope>DISULFIDE BONDS</scope>
    <scope>GLYCOSYLATION AT ASN-26 AND ASN-235</scope>
</reference>
<comment type="function">
    <text evidence="5 6 7 8">Transferrin receptor subunit involved in receptor-mediated acquisition of iron from the environment by binding host TF/transferrin.</text>
</comment>
<comment type="subunit">
    <text evidence="5 7 8">Heterodimer composed of ESAG6 and ESAG7.</text>
</comment>
<comment type="subcellular location">
    <subcellularLocation>
        <location evidence="7">Cell membrane</location>
        <topology evidence="7">Lipid-anchor</topology>
        <topology evidence="7">GPI-anchor</topology>
    </subcellularLocation>
    <subcellularLocation>
        <location evidence="7">Flagellar pocket</location>
    </subcellularLocation>
    <text evidence="7 8">Upon host TF/transferrin binding, the complex formed by ESAG6-ESAG7-TF is endocytosed and delivered to the lysosome where iron is released and host TF is degraded. ESAG6-ESAG7 are then recycled back to the flagellar pocket membrane (PubMed:7957316, PubMed:8522581). May also be secreted (PubMed:7957316).</text>
</comment>
<comment type="developmental stage">
    <text evidence="7">Expressed in the bloodstream form (at protein level).</text>
</comment>
<comment type="induction">
    <text evidence="3">Up-regulated by low iron levels.</text>
</comment>
<comment type="PTM">
    <text evidence="5 7 8">N-glycosylated (PubMed:18680745, PubMed:7957316, PubMed:8522581). Glycosylation is dispensable for heterodimer formation and host transferrin binding (PubMed:18680745).</text>
</comment>
<comment type="polymorphism">
    <text evidence="4 6">There are about 20 variants for ESAG6. ESAG6 is one of the expression site-associated genes (ESAGs) which, together with the variable surface glycoprotein (VSG) gene, are part of polycistronic transcriptional units known as the bloodstream-form expression sites (BESs) (PubMed:12106867). The number of BES is strain-dependent and only a single BES is expressed at any given time (PubMed:12106867). This monoallelic expression is responsible for the parasite's evasion of the host immune response by antigenic variation (PubMed:12106867). This entry is encoded by the BES17 locus and can bind transferrin from human, cow, goat, horse, rat, mouse, pig and rabbit (PubMed:12106867, PubMed:31636418).</text>
</comment>
<organism>
    <name type="scientific">Trypanosoma brucei brucei</name>
    <dbReference type="NCBI Taxonomy" id="5702"/>
    <lineage>
        <taxon>Eukaryota</taxon>
        <taxon>Discoba</taxon>
        <taxon>Euglenozoa</taxon>
        <taxon>Kinetoplastea</taxon>
        <taxon>Metakinetoplastina</taxon>
        <taxon>Trypanosomatida</taxon>
        <taxon>Trypanosomatidae</taxon>
        <taxon>Trypanosoma</taxon>
    </lineage>
</organism>